<accession>Q6WN20</accession>
<feature type="initiator methionine" description="Removed" evidence="1">
    <location>
        <position position="1"/>
    </location>
</feature>
<feature type="chain" id="PRO_0000052904" description="Hemoglobin subunit beta">
    <location>
        <begin position="2"/>
        <end position="147"/>
    </location>
</feature>
<feature type="domain" description="Globin" evidence="3">
    <location>
        <begin position="3"/>
        <end position="147"/>
    </location>
</feature>
<feature type="binding site" description="distal binding residue">
    <location>
        <position position="64"/>
    </location>
    <ligand>
        <name>heme b</name>
        <dbReference type="ChEBI" id="CHEBI:60344"/>
    </ligand>
    <ligandPart>
        <name>Fe</name>
        <dbReference type="ChEBI" id="CHEBI:18248"/>
    </ligandPart>
</feature>
<feature type="binding site" description="proximal binding residue">
    <location>
        <position position="93"/>
    </location>
    <ligand>
        <name>heme b</name>
        <dbReference type="ChEBI" id="CHEBI:60344"/>
    </ligand>
    <ligandPart>
        <name>Fe</name>
        <dbReference type="ChEBI" id="CHEBI:18248"/>
    </ligandPart>
</feature>
<feature type="modified residue" description="N-acetylvaline" evidence="1">
    <location>
        <position position="2"/>
    </location>
</feature>
<feature type="modified residue" description="Phosphothreonine" evidence="2">
    <location>
        <position position="13"/>
    </location>
</feature>
<feature type="modified residue" description="Phosphoserine" evidence="2">
    <location>
        <position position="45"/>
    </location>
</feature>
<feature type="modified residue" description="N6-acetyllysine" evidence="2">
    <location>
        <position position="60"/>
    </location>
</feature>
<feature type="modified residue" description="N6-acetyllysine" evidence="2">
    <location>
        <position position="83"/>
    </location>
</feature>
<feature type="modified residue" description="S-nitrosocysteine" evidence="2">
    <location>
        <position position="94"/>
    </location>
</feature>
<feature type="modified residue" description="N6-acetyllysine" evidence="2">
    <location>
        <position position="145"/>
    </location>
</feature>
<sequence length="147" mass="16057">MVHLTGEEKAAVTALWGKVNVXEVGGEALGRLLVVYPWTQRFFESFGDLSSPDAVMSNXKVKAHGKKVLGAFSDGLAHLDNLKSTFAQLSELHCDKLHVDPENFRLLGNVLVCVLAHHFGKEFTPQVQAAYQKVVAGVANALAHKYH</sequence>
<organism>
    <name type="scientific">Cheracebus torquatus</name>
    <name type="common">Collared titi monkey</name>
    <name type="synonym">Callicebus torquatus</name>
    <dbReference type="NCBI Taxonomy" id="30592"/>
    <lineage>
        <taxon>Eukaryota</taxon>
        <taxon>Metazoa</taxon>
        <taxon>Chordata</taxon>
        <taxon>Craniata</taxon>
        <taxon>Vertebrata</taxon>
        <taxon>Euteleostomi</taxon>
        <taxon>Mammalia</taxon>
        <taxon>Eutheria</taxon>
        <taxon>Euarchontoglires</taxon>
        <taxon>Primates</taxon>
        <taxon>Haplorrhini</taxon>
        <taxon>Platyrrhini</taxon>
        <taxon>Pitheciidae</taxon>
        <taxon>Callicebinae</taxon>
        <taxon>Cheracebus</taxon>
    </lineage>
</organism>
<keyword id="KW-0007">Acetylation</keyword>
<keyword id="KW-0349">Heme</keyword>
<keyword id="KW-0408">Iron</keyword>
<keyword id="KW-0479">Metal-binding</keyword>
<keyword id="KW-0561">Oxygen transport</keyword>
<keyword id="KW-0597">Phosphoprotein</keyword>
<keyword id="KW-0702">S-nitrosylation</keyword>
<keyword id="KW-0813">Transport</keyword>
<comment type="function">
    <text>Involved in oxygen transport from the lung to the various peripheral tissues.</text>
</comment>
<comment type="subunit">
    <text>Heterotetramer of two alpha chains and two beta chains.</text>
</comment>
<comment type="tissue specificity">
    <text>Red blood cells.</text>
</comment>
<comment type="similarity">
    <text evidence="3">Belongs to the globin family.</text>
</comment>
<gene>
    <name type="primary">HBB</name>
</gene>
<name>HBB_CHETO</name>
<dbReference type="EMBL" id="AY279119">
    <property type="protein sequence ID" value="AAQ18227.1"/>
    <property type="molecule type" value="Genomic_DNA"/>
</dbReference>
<dbReference type="GO" id="GO:0072562">
    <property type="term" value="C:blood microparticle"/>
    <property type="evidence" value="ECO:0007669"/>
    <property type="project" value="TreeGrafter"/>
</dbReference>
<dbReference type="GO" id="GO:0031838">
    <property type="term" value="C:haptoglobin-hemoglobin complex"/>
    <property type="evidence" value="ECO:0007669"/>
    <property type="project" value="TreeGrafter"/>
</dbReference>
<dbReference type="GO" id="GO:0005833">
    <property type="term" value="C:hemoglobin complex"/>
    <property type="evidence" value="ECO:0007669"/>
    <property type="project" value="InterPro"/>
</dbReference>
<dbReference type="GO" id="GO:0031720">
    <property type="term" value="F:haptoglobin binding"/>
    <property type="evidence" value="ECO:0007669"/>
    <property type="project" value="TreeGrafter"/>
</dbReference>
<dbReference type="GO" id="GO:0020037">
    <property type="term" value="F:heme binding"/>
    <property type="evidence" value="ECO:0007669"/>
    <property type="project" value="InterPro"/>
</dbReference>
<dbReference type="GO" id="GO:0031721">
    <property type="term" value="F:hemoglobin alpha binding"/>
    <property type="evidence" value="ECO:0007669"/>
    <property type="project" value="TreeGrafter"/>
</dbReference>
<dbReference type="GO" id="GO:0046872">
    <property type="term" value="F:metal ion binding"/>
    <property type="evidence" value="ECO:0007669"/>
    <property type="project" value="UniProtKB-KW"/>
</dbReference>
<dbReference type="GO" id="GO:0043177">
    <property type="term" value="F:organic acid binding"/>
    <property type="evidence" value="ECO:0007669"/>
    <property type="project" value="TreeGrafter"/>
</dbReference>
<dbReference type="GO" id="GO:0019825">
    <property type="term" value="F:oxygen binding"/>
    <property type="evidence" value="ECO:0007669"/>
    <property type="project" value="InterPro"/>
</dbReference>
<dbReference type="GO" id="GO:0005344">
    <property type="term" value="F:oxygen carrier activity"/>
    <property type="evidence" value="ECO:0007669"/>
    <property type="project" value="UniProtKB-KW"/>
</dbReference>
<dbReference type="GO" id="GO:0004601">
    <property type="term" value="F:peroxidase activity"/>
    <property type="evidence" value="ECO:0007669"/>
    <property type="project" value="TreeGrafter"/>
</dbReference>
<dbReference type="GO" id="GO:0042744">
    <property type="term" value="P:hydrogen peroxide catabolic process"/>
    <property type="evidence" value="ECO:0007669"/>
    <property type="project" value="TreeGrafter"/>
</dbReference>
<dbReference type="CDD" id="cd08925">
    <property type="entry name" value="Hb-beta-like"/>
    <property type="match status" value="1"/>
</dbReference>
<dbReference type="FunFam" id="1.10.490.10:FF:000001">
    <property type="entry name" value="Hemoglobin subunit beta"/>
    <property type="match status" value="1"/>
</dbReference>
<dbReference type="Gene3D" id="1.10.490.10">
    <property type="entry name" value="Globins"/>
    <property type="match status" value="1"/>
</dbReference>
<dbReference type="InterPro" id="IPR000971">
    <property type="entry name" value="Globin"/>
</dbReference>
<dbReference type="InterPro" id="IPR009050">
    <property type="entry name" value="Globin-like_sf"/>
</dbReference>
<dbReference type="InterPro" id="IPR012292">
    <property type="entry name" value="Globin/Proto"/>
</dbReference>
<dbReference type="InterPro" id="IPR002337">
    <property type="entry name" value="Hemoglobin_b"/>
</dbReference>
<dbReference type="InterPro" id="IPR050056">
    <property type="entry name" value="Hemoglobin_oxygen_transport"/>
</dbReference>
<dbReference type="PANTHER" id="PTHR11442">
    <property type="entry name" value="HEMOGLOBIN FAMILY MEMBER"/>
    <property type="match status" value="1"/>
</dbReference>
<dbReference type="PANTHER" id="PTHR11442:SF42">
    <property type="entry name" value="HEMOGLOBIN SUBUNIT BETA"/>
    <property type="match status" value="1"/>
</dbReference>
<dbReference type="Pfam" id="PF00042">
    <property type="entry name" value="Globin"/>
    <property type="match status" value="1"/>
</dbReference>
<dbReference type="PRINTS" id="PR00814">
    <property type="entry name" value="BETAHAEM"/>
</dbReference>
<dbReference type="SUPFAM" id="SSF46458">
    <property type="entry name" value="Globin-like"/>
    <property type="match status" value="1"/>
</dbReference>
<dbReference type="PROSITE" id="PS01033">
    <property type="entry name" value="GLOBIN"/>
    <property type="match status" value="1"/>
</dbReference>
<protein>
    <recommendedName>
        <fullName>Hemoglobin subunit beta</fullName>
    </recommendedName>
    <alternativeName>
        <fullName>Beta-globin</fullName>
    </alternativeName>
    <alternativeName>
        <fullName>Hemoglobin beta chain</fullName>
    </alternativeName>
</protein>
<proteinExistence type="evidence at transcript level"/>
<evidence type="ECO:0000250" key="1">
    <source>
        <dbReference type="UniProtKB" id="P02086"/>
    </source>
</evidence>
<evidence type="ECO:0000250" key="2">
    <source>
        <dbReference type="UniProtKB" id="P68871"/>
    </source>
</evidence>
<evidence type="ECO:0000255" key="3">
    <source>
        <dbReference type="PROSITE-ProRule" id="PRU00238"/>
    </source>
</evidence>
<reference key="1">
    <citation type="submission" date="2003-04" db="EMBL/GenBank/DDBJ databases">
        <title>The molecular evolution of the primate beta globin gene: an evaluation of gene conversion and phylogeny and an analysis of phylogenetic footprints in noncoding DNA.</title>
        <authorList>
            <person name="Prychitko T.M."/>
            <person name="Goodman M."/>
            <person name="Johnson R.M."/>
        </authorList>
    </citation>
    <scope>NUCLEOTIDE SEQUENCE [GENOMIC DNA]</scope>
</reference>